<keyword id="KW-0131">Cell cycle</keyword>
<keyword id="KW-0132">Cell division</keyword>
<keyword id="KW-0963">Cytoplasm</keyword>
<keyword id="KW-0217">Developmental protein</keyword>
<keyword id="KW-1185">Reference proteome</keyword>
<keyword id="KW-0677">Repeat</keyword>
<keyword id="KW-0833">Ubl conjugation pathway</keyword>
<keyword id="KW-0853">WD repeat</keyword>
<evidence type="ECO:0000250" key="1"/>
<evidence type="ECO:0000255" key="2">
    <source>
        <dbReference type="PROSITE-ProRule" id="PRU00080"/>
    </source>
</evidence>
<evidence type="ECO:0000256" key="3">
    <source>
        <dbReference type="SAM" id="MobiDB-lite"/>
    </source>
</evidence>
<evidence type="ECO:0000269" key="4">
    <source>
    </source>
</evidence>
<evidence type="ECO:0000305" key="5"/>
<accession>Q09990</accession>
<accession>Q9GNN6</accession>
<name>LIN23_CAEEL</name>
<reference key="1">
    <citation type="journal article" date="2000" name="Development">
        <title>The Caenorhabditis elegans F-box/WD-repeat protein lin-23 functions to limit cell division during development.</title>
        <authorList>
            <person name="Kipreos E.T."/>
            <person name="Gohel S.P."/>
            <person name="Hedgecock E.M."/>
        </authorList>
    </citation>
    <scope>NUCLEOTIDE SEQUENCE [MRNA]</scope>
    <scope>FUNCTION</scope>
    <scope>DEVELOPMENTAL STAGE</scope>
    <scope>MUTAGENESIS OF GLY-441</scope>
</reference>
<reference key="2">
    <citation type="journal article" date="1998" name="Science">
        <title>Genome sequence of the nematode C. elegans: a platform for investigating biology.</title>
        <authorList>
            <consortium name="The C. elegans sequencing consortium"/>
        </authorList>
    </citation>
    <scope>NUCLEOTIDE SEQUENCE [LARGE SCALE GENOMIC DNA]</scope>
    <source>
        <strain>Bristol N2</strain>
    </source>
</reference>
<organism>
    <name type="scientific">Caenorhabditis elegans</name>
    <dbReference type="NCBI Taxonomy" id="6239"/>
    <lineage>
        <taxon>Eukaryota</taxon>
        <taxon>Metazoa</taxon>
        <taxon>Ecdysozoa</taxon>
        <taxon>Nematoda</taxon>
        <taxon>Chromadorea</taxon>
        <taxon>Rhabditida</taxon>
        <taxon>Rhabditina</taxon>
        <taxon>Rhabditomorpha</taxon>
        <taxon>Rhabditoidea</taxon>
        <taxon>Rhabditidae</taxon>
        <taxon>Peloderinae</taxon>
        <taxon>Caenorhabditis</taxon>
    </lineage>
</organism>
<gene>
    <name type="primary">lin-23</name>
    <name type="ORF">K10B2.1</name>
</gene>
<proteinExistence type="evidence at protein level"/>
<sequence>MSSPHRASTTQQLADLSLTEGEHDEGKPLSIDYLQGHEGLIEEVLKWSEHEQLDFMDKIVHRLSHYQLGKVDNFIRPMLQRDFISNLPAHLVELILFNVNSDSLKSCEEVSTSWRCALARGQHWKKLIEKNVRSDSLWWGLSEKRQWDKFLNISRDMSVRRICEKFNYDVNIKRDKLDQLILMHVFYSKLYPKIIRDIHNIDNNWKRGNYKMTRINCQSENSKGVYCLQYDDDKIVSGLRDNTIKIWDRKDYSCSRILSGHTGSVLCLQYDNRVIISGSSDATVRVWDVETGECIKTLIHHCEAVLHLRFANGIMVTCSKDRSIAVWDMVSPRDITIRRVLVGHRAAVNVVDFDDRYIVSASGDRTIKVWSMDTLEFVRTLAGHRRGIACLQYRGRLVVSGSSDNTIRLWDIHSGVCLRVLEGHEELVRCIRFDEKRIVSGAYDGKIKVWDLQAALDPRALSSEICLCSLVQHTGRVFRLQFDDFQIVSSSHDDTILIWDFLDAPPSGLPSSTNRATLPELPNQAAVARAQMLFEMAARREIERRDREVVEEPALRPRANAARRHNADIAAAAAAAEAARGAGDNDESSSEEDLDRVDQVNNPNVAGPAPPQPHNQNHRRRQPRPELPVRLMQEMAAFDNMRRQQNNMDHLGGGDVDEEMPDGGP</sequence>
<dbReference type="EMBL" id="AF275253">
    <property type="protein sequence ID" value="AAG28037.1"/>
    <property type="molecule type" value="mRNA"/>
</dbReference>
<dbReference type="EMBL" id="FO080748">
    <property type="protein sequence ID" value="CCD66391.1"/>
    <property type="molecule type" value="Genomic_DNA"/>
</dbReference>
<dbReference type="PIR" id="T16607">
    <property type="entry name" value="T16607"/>
</dbReference>
<dbReference type="RefSeq" id="NP_495285.1">
    <property type="nucleotide sequence ID" value="NM_062884.7"/>
</dbReference>
<dbReference type="SMR" id="Q09990"/>
<dbReference type="BioGRID" id="39398">
    <property type="interactions" value="11"/>
</dbReference>
<dbReference type="FunCoup" id="Q09990">
    <property type="interactions" value="1023"/>
</dbReference>
<dbReference type="STRING" id="6239.K10B2.1b.2"/>
<dbReference type="PaxDb" id="6239-K10B2.1"/>
<dbReference type="PeptideAtlas" id="Q09990"/>
<dbReference type="EnsemblMetazoa" id="K10B2.1a.1">
    <property type="protein sequence ID" value="K10B2.1a.1"/>
    <property type="gene ID" value="WBGene00003009"/>
</dbReference>
<dbReference type="GeneID" id="174058"/>
<dbReference type="KEGG" id="cel:CELE_K10B2.1"/>
<dbReference type="UCSC" id="K10B2.1">
    <property type="organism name" value="c. elegans"/>
</dbReference>
<dbReference type="AGR" id="WB:WBGene00003009"/>
<dbReference type="CTD" id="174058"/>
<dbReference type="WormBase" id="K10B2.1a">
    <property type="protein sequence ID" value="CE28600"/>
    <property type="gene ID" value="WBGene00003009"/>
    <property type="gene designation" value="lin-23"/>
</dbReference>
<dbReference type="eggNOG" id="KOG0281">
    <property type="taxonomic scope" value="Eukaryota"/>
</dbReference>
<dbReference type="GeneTree" id="ENSGT00940000155898"/>
<dbReference type="HOGENOM" id="CLU_000288_103_6_1"/>
<dbReference type="InParanoid" id="Q09990"/>
<dbReference type="OrthoDB" id="19711at2759"/>
<dbReference type="PhylomeDB" id="Q09990"/>
<dbReference type="SignaLink" id="Q09990"/>
<dbReference type="PRO" id="PR:Q09990"/>
<dbReference type="Proteomes" id="UP000001940">
    <property type="component" value="Chromosome II"/>
</dbReference>
<dbReference type="Bgee" id="WBGene00003009">
    <property type="expression patterns" value="Expressed in pharyngeal muscle cell (C elegans) and 4 other cell types or tissues"/>
</dbReference>
<dbReference type="ExpressionAtlas" id="Q09990">
    <property type="expression patterns" value="baseline and differential"/>
</dbReference>
<dbReference type="GO" id="GO:0005737">
    <property type="term" value="C:cytoplasm"/>
    <property type="evidence" value="ECO:0000314"/>
    <property type="project" value="WormBase"/>
</dbReference>
<dbReference type="GO" id="GO:0043223">
    <property type="term" value="C:cytoplasmic SCF ubiquitin ligase complex"/>
    <property type="evidence" value="ECO:0000314"/>
    <property type="project" value="WormBase"/>
</dbReference>
<dbReference type="GO" id="GO:0005829">
    <property type="term" value="C:cytosol"/>
    <property type="evidence" value="ECO:0000314"/>
    <property type="project" value="WormBase"/>
</dbReference>
<dbReference type="GO" id="GO:0005634">
    <property type="term" value="C:nucleus"/>
    <property type="evidence" value="ECO:0000314"/>
    <property type="project" value="WormBase"/>
</dbReference>
<dbReference type="GO" id="GO:0019005">
    <property type="term" value="C:SCF ubiquitin ligase complex"/>
    <property type="evidence" value="ECO:0000318"/>
    <property type="project" value="GO_Central"/>
</dbReference>
<dbReference type="GO" id="GO:0008013">
    <property type="term" value="F:beta-catenin binding"/>
    <property type="evidence" value="ECO:0000353"/>
    <property type="project" value="WormBase"/>
</dbReference>
<dbReference type="GO" id="GO:0019902">
    <property type="term" value="F:phosphatase binding"/>
    <property type="evidence" value="ECO:0000353"/>
    <property type="project" value="WormBase"/>
</dbReference>
<dbReference type="GO" id="GO:0046983">
    <property type="term" value="F:protein dimerization activity"/>
    <property type="evidence" value="ECO:0007669"/>
    <property type="project" value="InterPro"/>
</dbReference>
<dbReference type="GO" id="GO:1990756">
    <property type="term" value="F:ubiquitin-like ligase-substrate adaptor activity"/>
    <property type="evidence" value="ECO:0000318"/>
    <property type="project" value="GO_Central"/>
</dbReference>
<dbReference type="GO" id="GO:0051301">
    <property type="term" value="P:cell division"/>
    <property type="evidence" value="ECO:0007669"/>
    <property type="project" value="UniProtKB-KW"/>
</dbReference>
<dbReference type="GO" id="GO:0008285">
    <property type="term" value="P:negative regulation of cell population proliferation"/>
    <property type="evidence" value="ECO:0000315"/>
    <property type="project" value="UniProtKB"/>
</dbReference>
<dbReference type="GO" id="GO:0010826">
    <property type="term" value="P:negative regulation of centrosome duplication"/>
    <property type="evidence" value="ECO:0000315"/>
    <property type="project" value="UniProtKB"/>
</dbReference>
<dbReference type="GO" id="GO:0048812">
    <property type="term" value="P:neuron projection morphogenesis"/>
    <property type="evidence" value="ECO:0000315"/>
    <property type="project" value="WormBase"/>
</dbReference>
<dbReference type="GO" id="GO:0000209">
    <property type="term" value="P:protein polyubiquitination"/>
    <property type="evidence" value="ECO:0000318"/>
    <property type="project" value="GO_Central"/>
</dbReference>
<dbReference type="GO" id="GO:0006508">
    <property type="term" value="P:proteolysis"/>
    <property type="evidence" value="ECO:0000318"/>
    <property type="project" value="GO_Central"/>
</dbReference>
<dbReference type="GO" id="GO:0051726">
    <property type="term" value="P:regulation of cell cycle"/>
    <property type="evidence" value="ECO:0000318"/>
    <property type="project" value="GO_Central"/>
</dbReference>
<dbReference type="GO" id="GO:0061136">
    <property type="term" value="P:regulation of proteasomal protein catabolic process"/>
    <property type="evidence" value="ECO:0000318"/>
    <property type="project" value="GO_Central"/>
</dbReference>
<dbReference type="GO" id="GO:0031647">
    <property type="term" value="P:regulation of protein stability"/>
    <property type="evidence" value="ECO:0000315"/>
    <property type="project" value="UniProtKB"/>
</dbReference>
<dbReference type="GO" id="GO:0006511">
    <property type="term" value="P:ubiquitin-dependent protein catabolic process"/>
    <property type="evidence" value="ECO:0000314"/>
    <property type="project" value="WormBase"/>
</dbReference>
<dbReference type="CDD" id="cd00200">
    <property type="entry name" value="WD40"/>
    <property type="match status" value="1"/>
</dbReference>
<dbReference type="FunFam" id="2.130.10.10:FF:000004">
    <property type="entry name" value="F-box/WD repeat-containing protein 11 isoform X2"/>
    <property type="match status" value="1"/>
</dbReference>
<dbReference type="FunFam" id="1.20.1280.50:FF:000117">
    <property type="entry name" value="F-box/WD repeat-containing protein lin-23"/>
    <property type="match status" value="1"/>
</dbReference>
<dbReference type="Gene3D" id="1.20.1280.50">
    <property type="match status" value="1"/>
</dbReference>
<dbReference type="Gene3D" id="6.10.250.1840">
    <property type="match status" value="1"/>
</dbReference>
<dbReference type="Gene3D" id="2.130.10.10">
    <property type="entry name" value="YVTN repeat-like/Quinoprotein amine dehydrogenase"/>
    <property type="match status" value="1"/>
</dbReference>
<dbReference type="InterPro" id="IPR021977">
    <property type="entry name" value="Beta-TrCP_D"/>
</dbReference>
<dbReference type="InterPro" id="IPR036047">
    <property type="entry name" value="F-box-like_dom_sf"/>
</dbReference>
<dbReference type="InterPro" id="IPR001810">
    <property type="entry name" value="F-box_dom"/>
</dbReference>
<dbReference type="InterPro" id="IPR020472">
    <property type="entry name" value="G-protein_beta_WD-40_rep"/>
</dbReference>
<dbReference type="InterPro" id="IPR050995">
    <property type="entry name" value="WD-F-box_domain-protein"/>
</dbReference>
<dbReference type="InterPro" id="IPR015943">
    <property type="entry name" value="WD40/YVTN_repeat-like_dom_sf"/>
</dbReference>
<dbReference type="InterPro" id="IPR019775">
    <property type="entry name" value="WD40_repeat_CS"/>
</dbReference>
<dbReference type="InterPro" id="IPR036322">
    <property type="entry name" value="WD40_repeat_dom_sf"/>
</dbReference>
<dbReference type="InterPro" id="IPR001680">
    <property type="entry name" value="WD40_rpt"/>
</dbReference>
<dbReference type="PANTHER" id="PTHR14604:SF4">
    <property type="entry name" value="F-BOX DOMAIN-CONTAINING PROTEIN"/>
    <property type="match status" value="1"/>
</dbReference>
<dbReference type="PANTHER" id="PTHR14604">
    <property type="entry name" value="WD40 REPEAT PF20"/>
    <property type="match status" value="1"/>
</dbReference>
<dbReference type="Pfam" id="PF12125">
    <property type="entry name" value="Beta-TrCP_D"/>
    <property type="match status" value="1"/>
</dbReference>
<dbReference type="Pfam" id="PF00400">
    <property type="entry name" value="WD40"/>
    <property type="match status" value="7"/>
</dbReference>
<dbReference type="PRINTS" id="PR00320">
    <property type="entry name" value="GPROTEINBRPT"/>
</dbReference>
<dbReference type="SMART" id="SM01028">
    <property type="entry name" value="Beta-TrCP_D"/>
    <property type="match status" value="1"/>
</dbReference>
<dbReference type="SMART" id="SM00256">
    <property type="entry name" value="FBOX"/>
    <property type="match status" value="1"/>
</dbReference>
<dbReference type="SMART" id="SM00320">
    <property type="entry name" value="WD40"/>
    <property type="match status" value="7"/>
</dbReference>
<dbReference type="SUPFAM" id="SSF81383">
    <property type="entry name" value="F-box domain"/>
    <property type="match status" value="1"/>
</dbReference>
<dbReference type="SUPFAM" id="SSF50978">
    <property type="entry name" value="WD40 repeat-like"/>
    <property type="match status" value="1"/>
</dbReference>
<dbReference type="PROSITE" id="PS50181">
    <property type="entry name" value="FBOX"/>
    <property type="match status" value="1"/>
</dbReference>
<dbReference type="PROSITE" id="PS00678">
    <property type="entry name" value="WD_REPEATS_1"/>
    <property type="match status" value="5"/>
</dbReference>
<dbReference type="PROSITE" id="PS50082">
    <property type="entry name" value="WD_REPEATS_2"/>
    <property type="match status" value="7"/>
</dbReference>
<dbReference type="PROSITE" id="PS50294">
    <property type="entry name" value="WD_REPEATS_REGION"/>
    <property type="match status" value="1"/>
</dbReference>
<protein>
    <recommendedName>
        <fullName>F-box/WD repeat-containing protein lin-23</fullName>
    </recommendedName>
    <alternativeName>
        <fullName>Abnormal cell lineage protein 23</fullName>
    </alternativeName>
</protein>
<feature type="chain" id="PRO_0000051058" description="F-box/WD repeat-containing protein lin-23">
    <location>
        <begin position="1"/>
        <end position="665"/>
    </location>
</feature>
<feature type="domain" description="F-box" evidence="2">
    <location>
        <begin position="81"/>
        <end position="127"/>
    </location>
</feature>
<feature type="repeat" description="WD 1">
    <location>
        <begin position="220"/>
        <end position="257"/>
    </location>
</feature>
<feature type="repeat" description="WD 2">
    <location>
        <begin position="260"/>
        <end position="299"/>
    </location>
</feature>
<feature type="repeat" description="WD 3">
    <location>
        <begin position="301"/>
        <end position="337"/>
    </location>
</feature>
<feature type="repeat" description="WD 4">
    <location>
        <begin position="343"/>
        <end position="380"/>
    </location>
</feature>
<feature type="repeat" description="WD 5">
    <location>
        <begin position="383"/>
        <end position="420"/>
    </location>
</feature>
<feature type="repeat" description="WD 6">
    <location>
        <begin position="423"/>
        <end position="460"/>
    </location>
</feature>
<feature type="repeat" description="WD 7">
    <location>
        <begin position="472"/>
        <end position="509"/>
    </location>
</feature>
<feature type="region of interest" description="Disordered" evidence="3">
    <location>
        <begin position="574"/>
        <end position="665"/>
    </location>
</feature>
<feature type="compositionally biased region" description="Acidic residues" evidence="3">
    <location>
        <begin position="584"/>
        <end position="595"/>
    </location>
</feature>
<feature type="compositionally biased region" description="Acidic residues" evidence="3">
    <location>
        <begin position="655"/>
        <end position="665"/>
    </location>
</feature>
<feature type="mutagenesis site" description="In Lin-32(RH293)." evidence="4">
    <original>G</original>
    <variation>R</variation>
    <location>
        <position position="441"/>
    </location>
</feature>
<comment type="function">
    <text evidence="1 4">Functions cell autonomously to negatively regulate cell cycle progression. Required to restrain cell proliferation in response to developmental cues. Probably recognizes and binds to some proteins and promotes their ubiquitination and degradation (By similarity).</text>
</comment>
<comment type="subunit">
    <text evidence="1">Part of a SCF (SKP1-cullin-F-box) protein ligase complex.</text>
</comment>
<comment type="subcellular location">
    <subcellularLocation>
        <location evidence="5">Cytoplasm</location>
    </subcellularLocation>
</comment>
<comment type="developmental stage">
    <text evidence="4">Highest levels in embryos and adults, lowest levels in larvae. Maternal expression results in high zygotic levels.</text>
</comment>